<feature type="chain" id="PRO_1000101112" description="Lysine--tRNA ligase">
    <location>
        <begin position="1"/>
        <end position="504"/>
    </location>
</feature>
<feature type="binding site" evidence="1">
    <location>
        <position position="411"/>
    </location>
    <ligand>
        <name>Mg(2+)</name>
        <dbReference type="ChEBI" id="CHEBI:18420"/>
        <label>1</label>
    </ligand>
</feature>
<feature type="binding site" evidence="1">
    <location>
        <position position="418"/>
    </location>
    <ligand>
        <name>Mg(2+)</name>
        <dbReference type="ChEBI" id="CHEBI:18420"/>
        <label>1</label>
    </ligand>
</feature>
<feature type="binding site" evidence="1">
    <location>
        <position position="418"/>
    </location>
    <ligand>
        <name>Mg(2+)</name>
        <dbReference type="ChEBI" id="CHEBI:18420"/>
        <label>2</label>
    </ligand>
</feature>
<evidence type="ECO:0000255" key="1">
    <source>
        <dbReference type="HAMAP-Rule" id="MF_00252"/>
    </source>
</evidence>
<name>SYK_CLOBM</name>
<keyword id="KW-0030">Aminoacyl-tRNA synthetase</keyword>
<keyword id="KW-0067">ATP-binding</keyword>
<keyword id="KW-0963">Cytoplasm</keyword>
<keyword id="KW-0436">Ligase</keyword>
<keyword id="KW-0460">Magnesium</keyword>
<keyword id="KW-0479">Metal-binding</keyword>
<keyword id="KW-0547">Nucleotide-binding</keyword>
<keyword id="KW-0648">Protein biosynthesis</keyword>
<protein>
    <recommendedName>
        <fullName evidence="1">Lysine--tRNA ligase</fullName>
        <ecNumber evidence="1">6.1.1.6</ecNumber>
    </recommendedName>
    <alternativeName>
        <fullName evidence="1">Lysyl-tRNA synthetase</fullName>
        <shortName evidence="1">LysRS</shortName>
    </alternativeName>
</protein>
<comment type="catalytic activity">
    <reaction evidence="1">
        <text>tRNA(Lys) + L-lysine + ATP = L-lysyl-tRNA(Lys) + AMP + diphosphate</text>
        <dbReference type="Rhea" id="RHEA:20792"/>
        <dbReference type="Rhea" id="RHEA-COMP:9696"/>
        <dbReference type="Rhea" id="RHEA-COMP:9697"/>
        <dbReference type="ChEBI" id="CHEBI:30616"/>
        <dbReference type="ChEBI" id="CHEBI:32551"/>
        <dbReference type="ChEBI" id="CHEBI:33019"/>
        <dbReference type="ChEBI" id="CHEBI:78442"/>
        <dbReference type="ChEBI" id="CHEBI:78529"/>
        <dbReference type="ChEBI" id="CHEBI:456215"/>
        <dbReference type="EC" id="6.1.1.6"/>
    </reaction>
</comment>
<comment type="cofactor">
    <cofactor evidence="1">
        <name>Mg(2+)</name>
        <dbReference type="ChEBI" id="CHEBI:18420"/>
    </cofactor>
    <text evidence="1">Binds 3 Mg(2+) ions per subunit.</text>
</comment>
<comment type="subunit">
    <text evidence="1">Homodimer.</text>
</comment>
<comment type="subcellular location">
    <subcellularLocation>
        <location evidence="1">Cytoplasm</location>
    </subcellularLocation>
</comment>
<comment type="similarity">
    <text evidence="1">Belongs to the class-II aminoacyl-tRNA synthetase family.</text>
</comment>
<gene>
    <name evidence="1" type="primary">lysS</name>
    <name type="ordered locus">CLK_2983</name>
</gene>
<accession>B1KTC1</accession>
<reference key="1">
    <citation type="journal article" date="2007" name="PLoS ONE">
        <title>Analysis of the neurotoxin complex genes in Clostridium botulinum A1-A4 and B1 strains: BoNT/A3, /Ba4 and /B1 clusters are located within plasmids.</title>
        <authorList>
            <person name="Smith T.J."/>
            <person name="Hill K.K."/>
            <person name="Foley B.T."/>
            <person name="Detter J.C."/>
            <person name="Munk A.C."/>
            <person name="Bruce D.C."/>
            <person name="Doggett N.A."/>
            <person name="Smith L.A."/>
            <person name="Marks J.D."/>
            <person name="Xie G."/>
            <person name="Brettin T.S."/>
        </authorList>
    </citation>
    <scope>NUCLEOTIDE SEQUENCE [LARGE SCALE GENOMIC DNA]</scope>
    <source>
        <strain>Loch Maree / Type A3</strain>
    </source>
</reference>
<proteinExistence type="inferred from homology"/>
<organism>
    <name type="scientific">Clostridium botulinum (strain Loch Maree / Type A3)</name>
    <dbReference type="NCBI Taxonomy" id="498214"/>
    <lineage>
        <taxon>Bacteria</taxon>
        <taxon>Bacillati</taxon>
        <taxon>Bacillota</taxon>
        <taxon>Clostridia</taxon>
        <taxon>Eubacteriales</taxon>
        <taxon>Clostridiaceae</taxon>
        <taxon>Clostridium</taxon>
    </lineage>
</organism>
<sequence length="504" mass="58271">MSKEDNVINNFEEQANELMKERFQKLKELQSNGKDPFDVYKVERTHTSKEVKDNYEDLEGKTVTVAGRLMSKRVHGKAGFSDIHDRYGKIQLYIKINDVGEEKLKEYKTFDIGDIISVTGTVFKTKTGETSIHITDFQLVCKSLRPLPEKWHGLKDPDLRYRQRYVDLIINQDVRDTFIKRTAIIKSMREFLDNRGFLEVETPILSPIAGGAAAKPFITHHNALDIDMYLRIATELYLKRLIVGGFEKVYEIGKNFRNEGIDIRHNPEFTAIELYEAYADYNDMMEITENMIAYICEKVLGTTKVEYEGAEIDFTPPWRRLTMVDAVKEYAGVDFNIIKDDIEARAIAKEKHIEFKKELKDCTKGDVLIGLFEEFCEDKLMQPTFICDYPVENSPLTKKKRGNEAFTERFEGFVFGREVCNAYSELNDSIVQKERFMQQLKERELGDDEAYMMDDDFITSLEVGMPPTGGLGIGIDRLIMFLTDTHSIRDVILFPTMKPQPNNQ</sequence>
<dbReference type="EC" id="6.1.1.6" evidence="1"/>
<dbReference type="EMBL" id="CP000962">
    <property type="protein sequence ID" value="ACA54800.1"/>
    <property type="molecule type" value="Genomic_DNA"/>
</dbReference>
<dbReference type="RefSeq" id="WP_012342857.1">
    <property type="nucleotide sequence ID" value="NC_010520.1"/>
</dbReference>
<dbReference type="SMR" id="B1KTC1"/>
<dbReference type="KEGG" id="cbl:CLK_2983"/>
<dbReference type="HOGENOM" id="CLU_008255_6_0_9"/>
<dbReference type="GO" id="GO:0005829">
    <property type="term" value="C:cytosol"/>
    <property type="evidence" value="ECO:0007669"/>
    <property type="project" value="TreeGrafter"/>
</dbReference>
<dbReference type="GO" id="GO:0005524">
    <property type="term" value="F:ATP binding"/>
    <property type="evidence" value="ECO:0007669"/>
    <property type="project" value="UniProtKB-UniRule"/>
</dbReference>
<dbReference type="GO" id="GO:0140096">
    <property type="term" value="F:catalytic activity, acting on a protein"/>
    <property type="evidence" value="ECO:0007669"/>
    <property type="project" value="UniProtKB-ARBA"/>
</dbReference>
<dbReference type="GO" id="GO:0004824">
    <property type="term" value="F:lysine-tRNA ligase activity"/>
    <property type="evidence" value="ECO:0007669"/>
    <property type="project" value="UniProtKB-UniRule"/>
</dbReference>
<dbReference type="GO" id="GO:0000287">
    <property type="term" value="F:magnesium ion binding"/>
    <property type="evidence" value="ECO:0007669"/>
    <property type="project" value="UniProtKB-UniRule"/>
</dbReference>
<dbReference type="GO" id="GO:0016740">
    <property type="term" value="F:transferase activity"/>
    <property type="evidence" value="ECO:0007669"/>
    <property type="project" value="UniProtKB-ARBA"/>
</dbReference>
<dbReference type="GO" id="GO:0000049">
    <property type="term" value="F:tRNA binding"/>
    <property type="evidence" value="ECO:0007669"/>
    <property type="project" value="TreeGrafter"/>
</dbReference>
<dbReference type="GO" id="GO:0006430">
    <property type="term" value="P:lysyl-tRNA aminoacylation"/>
    <property type="evidence" value="ECO:0007669"/>
    <property type="project" value="UniProtKB-UniRule"/>
</dbReference>
<dbReference type="CDD" id="cd00775">
    <property type="entry name" value="LysRS_core"/>
    <property type="match status" value="1"/>
</dbReference>
<dbReference type="CDD" id="cd04322">
    <property type="entry name" value="LysRS_N"/>
    <property type="match status" value="1"/>
</dbReference>
<dbReference type="FunFam" id="2.40.50.140:FF:000024">
    <property type="entry name" value="Lysine--tRNA ligase"/>
    <property type="match status" value="1"/>
</dbReference>
<dbReference type="FunFam" id="3.30.930.10:FF:000001">
    <property type="entry name" value="Lysine--tRNA ligase"/>
    <property type="match status" value="1"/>
</dbReference>
<dbReference type="Gene3D" id="3.30.930.10">
    <property type="entry name" value="Bira Bifunctional Protein, Domain 2"/>
    <property type="match status" value="1"/>
</dbReference>
<dbReference type="Gene3D" id="2.40.50.140">
    <property type="entry name" value="Nucleic acid-binding proteins"/>
    <property type="match status" value="1"/>
</dbReference>
<dbReference type="HAMAP" id="MF_00252">
    <property type="entry name" value="Lys_tRNA_synth_class2"/>
    <property type="match status" value="1"/>
</dbReference>
<dbReference type="InterPro" id="IPR004364">
    <property type="entry name" value="Aa-tRNA-synt_II"/>
</dbReference>
<dbReference type="InterPro" id="IPR006195">
    <property type="entry name" value="aa-tRNA-synth_II"/>
</dbReference>
<dbReference type="InterPro" id="IPR045864">
    <property type="entry name" value="aa-tRNA-synth_II/BPL/LPL"/>
</dbReference>
<dbReference type="InterPro" id="IPR002313">
    <property type="entry name" value="Lys-tRNA-ligase_II"/>
</dbReference>
<dbReference type="InterPro" id="IPR034762">
    <property type="entry name" value="Lys-tRNA-ligase_II_bac/euk"/>
</dbReference>
<dbReference type="InterPro" id="IPR044136">
    <property type="entry name" value="Lys-tRNA-ligase_II_N"/>
</dbReference>
<dbReference type="InterPro" id="IPR018149">
    <property type="entry name" value="Lys-tRNA-synth_II_C"/>
</dbReference>
<dbReference type="InterPro" id="IPR012340">
    <property type="entry name" value="NA-bd_OB-fold"/>
</dbReference>
<dbReference type="InterPro" id="IPR004365">
    <property type="entry name" value="NA-bd_OB_tRNA"/>
</dbReference>
<dbReference type="NCBIfam" id="TIGR00499">
    <property type="entry name" value="lysS_bact"/>
    <property type="match status" value="1"/>
</dbReference>
<dbReference type="NCBIfam" id="NF001756">
    <property type="entry name" value="PRK00484.1"/>
    <property type="match status" value="1"/>
</dbReference>
<dbReference type="PANTHER" id="PTHR42918:SF15">
    <property type="entry name" value="LYSINE--TRNA LIGASE, CHLOROPLASTIC_MITOCHONDRIAL"/>
    <property type="match status" value="1"/>
</dbReference>
<dbReference type="PANTHER" id="PTHR42918">
    <property type="entry name" value="LYSYL-TRNA SYNTHETASE"/>
    <property type="match status" value="1"/>
</dbReference>
<dbReference type="Pfam" id="PF00152">
    <property type="entry name" value="tRNA-synt_2"/>
    <property type="match status" value="1"/>
</dbReference>
<dbReference type="Pfam" id="PF01336">
    <property type="entry name" value="tRNA_anti-codon"/>
    <property type="match status" value="1"/>
</dbReference>
<dbReference type="PIRSF" id="PIRSF039101">
    <property type="entry name" value="LysRS2"/>
    <property type="match status" value="1"/>
</dbReference>
<dbReference type="PRINTS" id="PR00982">
    <property type="entry name" value="TRNASYNTHLYS"/>
</dbReference>
<dbReference type="SUPFAM" id="SSF55681">
    <property type="entry name" value="Class II aaRS and biotin synthetases"/>
    <property type="match status" value="1"/>
</dbReference>
<dbReference type="SUPFAM" id="SSF50249">
    <property type="entry name" value="Nucleic acid-binding proteins"/>
    <property type="match status" value="1"/>
</dbReference>
<dbReference type="PROSITE" id="PS50862">
    <property type="entry name" value="AA_TRNA_LIGASE_II"/>
    <property type="match status" value="1"/>
</dbReference>